<dbReference type="EC" id="2.7.1.33" evidence="1"/>
<dbReference type="EMBL" id="CP001407">
    <property type="protein sequence ID" value="ACO26163.1"/>
    <property type="molecule type" value="Genomic_DNA"/>
</dbReference>
<dbReference type="RefSeq" id="WP_000578367.1">
    <property type="nucleotide sequence ID" value="NZ_CP009318.1"/>
</dbReference>
<dbReference type="SMR" id="C1ESZ6"/>
<dbReference type="KEGG" id="bcx:BCA_0078"/>
<dbReference type="PATRIC" id="fig|572264.18.peg.129"/>
<dbReference type="UniPathway" id="UPA00241">
    <property type="reaction ID" value="UER00352"/>
</dbReference>
<dbReference type="Proteomes" id="UP000002210">
    <property type="component" value="Chromosome"/>
</dbReference>
<dbReference type="GO" id="GO:0005737">
    <property type="term" value="C:cytoplasm"/>
    <property type="evidence" value="ECO:0007669"/>
    <property type="project" value="UniProtKB-SubCell"/>
</dbReference>
<dbReference type="GO" id="GO:0005524">
    <property type="term" value="F:ATP binding"/>
    <property type="evidence" value="ECO:0007669"/>
    <property type="project" value="UniProtKB-UniRule"/>
</dbReference>
<dbReference type="GO" id="GO:0046872">
    <property type="term" value="F:metal ion binding"/>
    <property type="evidence" value="ECO:0007669"/>
    <property type="project" value="UniProtKB-KW"/>
</dbReference>
<dbReference type="GO" id="GO:0004594">
    <property type="term" value="F:pantothenate kinase activity"/>
    <property type="evidence" value="ECO:0007669"/>
    <property type="project" value="UniProtKB-UniRule"/>
</dbReference>
<dbReference type="GO" id="GO:0015937">
    <property type="term" value="P:coenzyme A biosynthetic process"/>
    <property type="evidence" value="ECO:0007669"/>
    <property type="project" value="UniProtKB-UniRule"/>
</dbReference>
<dbReference type="CDD" id="cd24015">
    <property type="entry name" value="ASKHA_NBD_PanK-III"/>
    <property type="match status" value="1"/>
</dbReference>
<dbReference type="Gene3D" id="3.30.420.40">
    <property type="match status" value="2"/>
</dbReference>
<dbReference type="HAMAP" id="MF_01274">
    <property type="entry name" value="Pantothen_kinase_3"/>
    <property type="match status" value="1"/>
</dbReference>
<dbReference type="InterPro" id="IPR043129">
    <property type="entry name" value="ATPase_NBD"/>
</dbReference>
<dbReference type="InterPro" id="IPR004619">
    <property type="entry name" value="Type_III_PanK"/>
</dbReference>
<dbReference type="NCBIfam" id="TIGR00671">
    <property type="entry name" value="baf"/>
    <property type="match status" value="1"/>
</dbReference>
<dbReference type="NCBIfam" id="NF009843">
    <property type="entry name" value="PRK13318.1-1"/>
    <property type="match status" value="1"/>
</dbReference>
<dbReference type="NCBIfam" id="NF009847">
    <property type="entry name" value="PRK13318.1-5"/>
    <property type="match status" value="1"/>
</dbReference>
<dbReference type="NCBIfam" id="NF009848">
    <property type="entry name" value="PRK13318.1-6"/>
    <property type="match status" value="1"/>
</dbReference>
<dbReference type="NCBIfam" id="NF009855">
    <property type="entry name" value="PRK13321.1"/>
    <property type="match status" value="1"/>
</dbReference>
<dbReference type="PANTHER" id="PTHR34265">
    <property type="entry name" value="TYPE III PANTOTHENATE KINASE"/>
    <property type="match status" value="1"/>
</dbReference>
<dbReference type="PANTHER" id="PTHR34265:SF1">
    <property type="entry name" value="TYPE III PANTOTHENATE KINASE"/>
    <property type="match status" value="1"/>
</dbReference>
<dbReference type="Pfam" id="PF03309">
    <property type="entry name" value="Pan_kinase"/>
    <property type="match status" value="1"/>
</dbReference>
<dbReference type="SUPFAM" id="SSF53067">
    <property type="entry name" value="Actin-like ATPase domain"/>
    <property type="match status" value="2"/>
</dbReference>
<protein>
    <recommendedName>
        <fullName evidence="1">Type III pantothenate kinase</fullName>
        <ecNumber evidence="1">2.7.1.33</ecNumber>
    </recommendedName>
    <alternativeName>
        <fullName evidence="1">PanK-III</fullName>
    </alternativeName>
    <alternativeName>
        <fullName evidence="1">Pantothenic acid kinase</fullName>
    </alternativeName>
</protein>
<accession>C1ESZ6</accession>
<evidence type="ECO:0000255" key="1">
    <source>
        <dbReference type="HAMAP-Rule" id="MF_01274"/>
    </source>
</evidence>
<gene>
    <name evidence="1" type="primary">coaX</name>
    <name type="ordered locus">BCA_0078</name>
</gene>
<comment type="function">
    <text evidence="1">Catalyzes the phosphorylation of pantothenate (Pan), the first step in CoA biosynthesis.</text>
</comment>
<comment type="catalytic activity">
    <reaction evidence="1">
        <text>(R)-pantothenate + ATP = (R)-4'-phosphopantothenate + ADP + H(+)</text>
        <dbReference type="Rhea" id="RHEA:16373"/>
        <dbReference type="ChEBI" id="CHEBI:10986"/>
        <dbReference type="ChEBI" id="CHEBI:15378"/>
        <dbReference type="ChEBI" id="CHEBI:29032"/>
        <dbReference type="ChEBI" id="CHEBI:30616"/>
        <dbReference type="ChEBI" id="CHEBI:456216"/>
        <dbReference type="EC" id="2.7.1.33"/>
    </reaction>
</comment>
<comment type="cofactor">
    <cofactor evidence="1">
        <name>NH4(+)</name>
        <dbReference type="ChEBI" id="CHEBI:28938"/>
    </cofactor>
    <cofactor evidence="1">
        <name>K(+)</name>
        <dbReference type="ChEBI" id="CHEBI:29103"/>
    </cofactor>
    <text evidence="1">A monovalent cation. Ammonium or potassium.</text>
</comment>
<comment type="pathway">
    <text evidence="1">Cofactor biosynthesis; coenzyme A biosynthesis; CoA from (R)-pantothenate: step 1/5.</text>
</comment>
<comment type="subunit">
    <text evidence="1">Homodimer.</text>
</comment>
<comment type="subcellular location">
    <subcellularLocation>
        <location evidence="1">Cytoplasm</location>
    </subcellularLocation>
</comment>
<comment type="similarity">
    <text evidence="1">Belongs to the type III pantothenate kinase family.</text>
</comment>
<name>COAX_BACC3</name>
<sequence length="262" mass="29094">MIFVLDVGNTNAVLGVFEEGELRQHWRMETDRHKTEDEYGMLVKQLLEHEGLSFEDVKGIIVSSVVPPIMFALERMCEKYFKIKPLVVGPGIKTGLNIKYENPREVGADRIVNAVAGIHLYGSPLIIVDFGTATTYCYINEEKHYMGGVITPGIMISAEALYSRAAKLPRIEITKPSSVVGKNTVSAMQSGILYGYVGQVEGIVKRMKEEAKQEPKVIATGGLAKLISEESNVIDVVDPFLTLKGLYMLYERNANLQHEKGE</sequence>
<feature type="chain" id="PRO_1000165187" description="Type III pantothenate kinase">
    <location>
        <begin position="1"/>
        <end position="262"/>
    </location>
</feature>
<feature type="active site" description="Proton acceptor" evidence="1">
    <location>
        <position position="109"/>
    </location>
</feature>
<feature type="binding site" evidence="1">
    <location>
        <begin position="6"/>
        <end position="13"/>
    </location>
    <ligand>
        <name>ATP</name>
        <dbReference type="ChEBI" id="CHEBI:30616"/>
    </ligand>
</feature>
<feature type="binding site" evidence="1">
    <location>
        <position position="100"/>
    </location>
    <ligand>
        <name>substrate</name>
    </ligand>
</feature>
<feature type="binding site" evidence="1">
    <location>
        <begin position="107"/>
        <end position="110"/>
    </location>
    <ligand>
        <name>substrate</name>
    </ligand>
</feature>
<feature type="binding site" evidence="1">
    <location>
        <position position="129"/>
    </location>
    <ligand>
        <name>K(+)</name>
        <dbReference type="ChEBI" id="CHEBI:29103"/>
    </ligand>
</feature>
<feature type="binding site" evidence="1">
    <location>
        <position position="132"/>
    </location>
    <ligand>
        <name>ATP</name>
        <dbReference type="ChEBI" id="CHEBI:30616"/>
    </ligand>
</feature>
<feature type="binding site" evidence="1">
    <location>
        <position position="184"/>
    </location>
    <ligand>
        <name>substrate</name>
    </ligand>
</feature>
<organism>
    <name type="scientific">Bacillus cereus (strain 03BB102)</name>
    <dbReference type="NCBI Taxonomy" id="572264"/>
    <lineage>
        <taxon>Bacteria</taxon>
        <taxon>Bacillati</taxon>
        <taxon>Bacillota</taxon>
        <taxon>Bacilli</taxon>
        <taxon>Bacillales</taxon>
        <taxon>Bacillaceae</taxon>
        <taxon>Bacillus</taxon>
        <taxon>Bacillus cereus group</taxon>
    </lineage>
</organism>
<proteinExistence type="inferred from homology"/>
<reference key="1">
    <citation type="submission" date="2009-02" db="EMBL/GenBank/DDBJ databases">
        <title>Genome sequence of Bacillus cereus 03BB102.</title>
        <authorList>
            <person name="Dodson R.J."/>
            <person name="Jackson P."/>
            <person name="Munk A.C."/>
            <person name="Brettin T."/>
            <person name="Bruce D."/>
            <person name="Detter C."/>
            <person name="Tapia R."/>
            <person name="Han C."/>
            <person name="Sutton G."/>
            <person name="Sims D."/>
        </authorList>
    </citation>
    <scope>NUCLEOTIDE SEQUENCE [LARGE SCALE GENOMIC DNA]</scope>
    <source>
        <strain>03BB102</strain>
    </source>
</reference>
<keyword id="KW-0067">ATP-binding</keyword>
<keyword id="KW-0173">Coenzyme A biosynthesis</keyword>
<keyword id="KW-0963">Cytoplasm</keyword>
<keyword id="KW-0418">Kinase</keyword>
<keyword id="KW-0479">Metal-binding</keyword>
<keyword id="KW-0547">Nucleotide-binding</keyword>
<keyword id="KW-0630">Potassium</keyword>
<keyword id="KW-0808">Transferase</keyword>